<feature type="chain" id="PRO_1000129894" description="Protein Smg">
    <location>
        <begin position="1"/>
        <end position="157"/>
    </location>
</feature>
<name>SMG_KLEP3</name>
<evidence type="ECO:0000255" key="1">
    <source>
        <dbReference type="HAMAP-Rule" id="MF_00598"/>
    </source>
</evidence>
<reference key="1">
    <citation type="journal article" date="2008" name="PLoS Genet.">
        <title>Complete genome sequence of the N2-fixing broad host range endophyte Klebsiella pneumoniae 342 and virulence predictions verified in mice.</title>
        <authorList>
            <person name="Fouts D.E."/>
            <person name="Tyler H.L."/>
            <person name="DeBoy R.T."/>
            <person name="Daugherty S."/>
            <person name="Ren Q."/>
            <person name="Badger J.H."/>
            <person name="Durkin A.S."/>
            <person name="Huot H."/>
            <person name="Shrivastava S."/>
            <person name="Kothari S."/>
            <person name="Dodson R.J."/>
            <person name="Mohamoud Y."/>
            <person name="Khouri H."/>
            <person name="Roesch L.F.W."/>
            <person name="Krogfelt K.A."/>
            <person name="Struve C."/>
            <person name="Triplett E.W."/>
            <person name="Methe B.A."/>
        </authorList>
    </citation>
    <scope>NUCLEOTIDE SEQUENCE [LARGE SCALE GENOMIC DNA]</scope>
    <source>
        <strain>342</strain>
    </source>
</reference>
<dbReference type="EMBL" id="CP000964">
    <property type="protein sequence ID" value="ACI06641.1"/>
    <property type="molecule type" value="Genomic_DNA"/>
</dbReference>
<dbReference type="SMR" id="B5XNC6"/>
<dbReference type="KEGG" id="kpe:KPK_0431"/>
<dbReference type="HOGENOM" id="CLU_133242_0_0_6"/>
<dbReference type="Proteomes" id="UP000001734">
    <property type="component" value="Chromosome"/>
</dbReference>
<dbReference type="HAMAP" id="MF_00598">
    <property type="entry name" value="Smg"/>
    <property type="match status" value="1"/>
</dbReference>
<dbReference type="InterPro" id="IPR007456">
    <property type="entry name" value="Smg"/>
</dbReference>
<dbReference type="NCBIfam" id="NF002897">
    <property type="entry name" value="PRK03430.1"/>
    <property type="match status" value="1"/>
</dbReference>
<dbReference type="PANTHER" id="PTHR38692">
    <property type="entry name" value="PROTEIN SMG"/>
    <property type="match status" value="1"/>
</dbReference>
<dbReference type="PANTHER" id="PTHR38692:SF1">
    <property type="entry name" value="PROTEIN SMG"/>
    <property type="match status" value="1"/>
</dbReference>
<dbReference type="Pfam" id="PF04361">
    <property type="entry name" value="DUF494"/>
    <property type="match status" value="1"/>
</dbReference>
<sequence>MFDVLMYLFETYIHNEAEMRVDQDKLTRDLTDAGFEREDIYNALMWLEKLADYQEGLVEPMQLASDPLSLRVYTEEECQRLDASCRGFLLFLEQIQVLNLETREMVIERVLALDTAEFELEDLKWVILMVLFNIPGCENAYQQMEELLFEVNEGMLH</sequence>
<organism>
    <name type="scientific">Klebsiella pneumoniae (strain 342)</name>
    <dbReference type="NCBI Taxonomy" id="507522"/>
    <lineage>
        <taxon>Bacteria</taxon>
        <taxon>Pseudomonadati</taxon>
        <taxon>Pseudomonadota</taxon>
        <taxon>Gammaproteobacteria</taxon>
        <taxon>Enterobacterales</taxon>
        <taxon>Enterobacteriaceae</taxon>
        <taxon>Klebsiella/Raoultella group</taxon>
        <taxon>Klebsiella</taxon>
        <taxon>Klebsiella pneumoniae complex</taxon>
    </lineage>
</organism>
<gene>
    <name evidence="1" type="primary">smg</name>
    <name type="ordered locus">KPK_0431</name>
</gene>
<proteinExistence type="inferred from homology"/>
<accession>B5XNC6</accession>
<comment type="similarity">
    <text evidence="1">Belongs to the Smg family.</text>
</comment>
<protein>
    <recommendedName>
        <fullName evidence="1">Protein Smg</fullName>
    </recommendedName>
</protein>